<geneLocation type="chloroplast"/>
<organism>
    <name type="scientific">Chaetosphaeridium globosum</name>
    <name type="common">Charophycean green alga</name>
    <name type="synonym">Herposteiron globosum</name>
    <dbReference type="NCBI Taxonomy" id="96477"/>
    <lineage>
        <taxon>Eukaryota</taxon>
        <taxon>Viridiplantae</taxon>
        <taxon>Streptophyta</taxon>
        <taxon>Coleochaetophyceae</taxon>
        <taxon>Coleochaetales</taxon>
        <taxon>Chaetosphaeridiaceae</taxon>
        <taxon>Chaetosphaeridium</taxon>
    </lineage>
</organism>
<feature type="chain" id="PRO_0000129669" description="Large ribosomal subunit protein uL2c">
    <location>
        <begin position="1"/>
        <end position="275"/>
    </location>
</feature>
<feature type="region of interest" description="Disordered" evidence="3">
    <location>
        <begin position="224"/>
        <end position="263"/>
    </location>
</feature>
<protein>
    <recommendedName>
        <fullName evidence="2">Large ribosomal subunit protein uL2c</fullName>
    </recommendedName>
    <alternativeName>
        <fullName evidence="4">50S ribosomal protein L2, chloroplastic</fullName>
    </alternativeName>
</protein>
<comment type="subunit">
    <text evidence="1">Part of the 50S ribosomal subunit.</text>
</comment>
<comment type="subcellular location">
    <subcellularLocation>
        <location>Plastid</location>
        <location>Chloroplast</location>
    </subcellularLocation>
</comment>
<comment type="similarity">
    <text evidence="4">Belongs to the universal ribosomal protein uL2 family.</text>
</comment>
<dbReference type="EMBL" id="AF494278">
    <property type="protein sequence ID" value="AAM96556.1"/>
    <property type="molecule type" value="Genomic_DNA"/>
</dbReference>
<dbReference type="RefSeq" id="NP_683843.1">
    <property type="nucleotide sequence ID" value="NC_004115.1"/>
</dbReference>
<dbReference type="SMR" id="Q8M9U7"/>
<dbReference type="GeneID" id="860712"/>
<dbReference type="GO" id="GO:0009507">
    <property type="term" value="C:chloroplast"/>
    <property type="evidence" value="ECO:0007669"/>
    <property type="project" value="UniProtKB-SubCell"/>
</dbReference>
<dbReference type="GO" id="GO:0005762">
    <property type="term" value="C:mitochondrial large ribosomal subunit"/>
    <property type="evidence" value="ECO:0007669"/>
    <property type="project" value="TreeGrafter"/>
</dbReference>
<dbReference type="GO" id="GO:0019843">
    <property type="term" value="F:rRNA binding"/>
    <property type="evidence" value="ECO:0007669"/>
    <property type="project" value="UniProtKB-UniRule"/>
</dbReference>
<dbReference type="GO" id="GO:0003735">
    <property type="term" value="F:structural constituent of ribosome"/>
    <property type="evidence" value="ECO:0007669"/>
    <property type="project" value="InterPro"/>
</dbReference>
<dbReference type="GO" id="GO:0016740">
    <property type="term" value="F:transferase activity"/>
    <property type="evidence" value="ECO:0007669"/>
    <property type="project" value="InterPro"/>
</dbReference>
<dbReference type="GO" id="GO:0032543">
    <property type="term" value="P:mitochondrial translation"/>
    <property type="evidence" value="ECO:0007669"/>
    <property type="project" value="TreeGrafter"/>
</dbReference>
<dbReference type="FunFam" id="2.30.30.30:FF:000001">
    <property type="entry name" value="50S ribosomal protein L2"/>
    <property type="match status" value="1"/>
</dbReference>
<dbReference type="FunFam" id="2.40.50.140:FF:000003">
    <property type="entry name" value="50S ribosomal protein L2"/>
    <property type="match status" value="1"/>
</dbReference>
<dbReference type="FunFam" id="4.10.950.10:FF:000001">
    <property type="entry name" value="50S ribosomal protein L2"/>
    <property type="match status" value="1"/>
</dbReference>
<dbReference type="Gene3D" id="2.30.30.30">
    <property type="match status" value="1"/>
</dbReference>
<dbReference type="Gene3D" id="2.40.50.140">
    <property type="entry name" value="Nucleic acid-binding proteins"/>
    <property type="match status" value="1"/>
</dbReference>
<dbReference type="Gene3D" id="4.10.950.10">
    <property type="entry name" value="Ribosomal protein L2, domain 3"/>
    <property type="match status" value="1"/>
</dbReference>
<dbReference type="HAMAP" id="MF_01320_B">
    <property type="entry name" value="Ribosomal_uL2_B"/>
    <property type="match status" value="1"/>
</dbReference>
<dbReference type="InterPro" id="IPR012340">
    <property type="entry name" value="NA-bd_OB-fold"/>
</dbReference>
<dbReference type="InterPro" id="IPR014722">
    <property type="entry name" value="Rib_uL2_dom2"/>
</dbReference>
<dbReference type="InterPro" id="IPR002171">
    <property type="entry name" value="Ribosomal_uL2"/>
</dbReference>
<dbReference type="InterPro" id="IPR005880">
    <property type="entry name" value="Ribosomal_uL2_bac/org-type"/>
</dbReference>
<dbReference type="InterPro" id="IPR022669">
    <property type="entry name" value="Ribosomal_uL2_C"/>
</dbReference>
<dbReference type="InterPro" id="IPR022671">
    <property type="entry name" value="Ribosomal_uL2_CS"/>
</dbReference>
<dbReference type="InterPro" id="IPR014726">
    <property type="entry name" value="Ribosomal_uL2_dom3"/>
</dbReference>
<dbReference type="InterPro" id="IPR022666">
    <property type="entry name" value="Ribosomal_uL2_RNA-bd_dom"/>
</dbReference>
<dbReference type="InterPro" id="IPR008991">
    <property type="entry name" value="Translation_prot_SH3-like_sf"/>
</dbReference>
<dbReference type="NCBIfam" id="TIGR01171">
    <property type="entry name" value="rplB_bact"/>
    <property type="match status" value="1"/>
</dbReference>
<dbReference type="PANTHER" id="PTHR13691:SF5">
    <property type="entry name" value="LARGE RIBOSOMAL SUBUNIT PROTEIN UL2M"/>
    <property type="match status" value="1"/>
</dbReference>
<dbReference type="PANTHER" id="PTHR13691">
    <property type="entry name" value="RIBOSOMAL PROTEIN L2"/>
    <property type="match status" value="1"/>
</dbReference>
<dbReference type="Pfam" id="PF00181">
    <property type="entry name" value="Ribosomal_L2"/>
    <property type="match status" value="1"/>
</dbReference>
<dbReference type="Pfam" id="PF03947">
    <property type="entry name" value="Ribosomal_L2_C"/>
    <property type="match status" value="1"/>
</dbReference>
<dbReference type="PIRSF" id="PIRSF002158">
    <property type="entry name" value="Ribosomal_L2"/>
    <property type="match status" value="1"/>
</dbReference>
<dbReference type="SMART" id="SM01383">
    <property type="entry name" value="Ribosomal_L2"/>
    <property type="match status" value="1"/>
</dbReference>
<dbReference type="SMART" id="SM01382">
    <property type="entry name" value="Ribosomal_L2_C"/>
    <property type="match status" value="1"/>
</dbReference>
<dbReference type="SUPFAM" id="SSF50249">
    <property type="entry name" value="Nucleic acid-binding proteins"/>
    <property type="match status" value="1"/>
</dbReference>
<dbReference type="SUPFAM" id="SSF50104">
    <property type="entry name" value="Translation proteins SH3-like domain"/>
    <property type="match status" value="1"/>
</dbReference>
<dbReference type="PROSITE" id="PS00467">
    <property type="entry name" value="RIBOSOMAL_L2"/>
    <property type="match status" value="1"/>
</dbReference>
<accession>Q8M9U7</accession>
<name>RK2_CHAGL</name>
<keyword id="KW-0150">Chloroplast</keyword>
<keyword id="KW-0934">Plastid</keyword>
<keyword id="KW-0687">Ribonucleoprotein</keyword>
<keyword id="KW-0689">Ribosomal protein</keyword>
<evidence type="ECO:0000250" key="1"/>
<evidence type="ECO:0000255" key="2">
    <source>
        <dbReference type="HAMAP-Rule" id="MF_01320"/>
    </source>
</evidence>
<evidence type="ECO:0000256" key="3">
    <source>
        <dbReference type="SAM" id="MobiDB-lite"/>
    </source>
</evidence>
<evidence type="ECO:0000305" key="4"/>
<sequence>MGIRLYKAYTPGTRNRSISDFKELKNNKPEKSLTSSYHKKQGRNNRGIITIRHRGGGHKKLYRQIDFERNKFNIPGQVKSIEYDPNRNTRISLIHYEDGEKRYILAPRGLNIGDKIISSEEADITIGNTLPLTKIPLGTAIHNIEIKPGKGGQLVRSAGTVAQLIAKEGLVATIRLPSGEVRTIGKNCLATIGQLGNVDSNNRSFGKAGSKRWLGKKPTVRGVVMNPVDHPHGGGEGRAPIGRKRPLTPWGRPALGKKSRKNHKYSDAFIIRRRK</sequence>
<gene>
    <name type="primary">rpl2</name>
</gene>
<reference key="1">
    <citation type="journal article" date="2002" name="Proc. Natl. Acad. Sci. U.S.A.">
        <title>The chloroplast and mitochondrial genome sequences of the charophyte Chaetosphaeridium globosum: insights into the timing of the events that restructured organelle DNAs within the green algal lineage that led to land plants.</title>
        <authorList>
            <person name="Turmel M."/>
            <person name="Otis C."/>
            <person name="Lemieux C."/>
        </authorList>
    </citation>
    <scope>NUCLEOTIDE SEQUENCE [LARGE SCALE GENOMIC DNA]</scope>
    <source>
        <strain>M1311</strain>
    </source>
</reference>
<proteinExistence type="inferred from homology"/>